<feature type="chain" id="PRO_0000142646" description="Nucleoprotein">
    <location>
        <begin position="1"/>
        <end position="523"/>
    </location>
</feature>
<feature type="region of interest" description="Ncore" evidence="2">
    <location>
        <begin position="1"/>
        <end position="403"/>
    </location>
</feature>
<feature type="region of interest" description="RNA packaging and organization of the helical nucleocapsid" evidence="6">
    <location>
        <begin position="1"/>
        <end position="375"/>
    </location>
</feature>
<feature type="region of interest" description="Homomultimerization" evidence="3">
    <location>
        <begin position="1"/>
        <end position="36"/>
    </location>
</feature>
<feature type="region of interest" description="Homomultimerization" evidence="3">
    <location>
        <begin position="373"/>
        <end position="391"/>
    </location>
</feature>
<feature type="region of interest" description="Ntail" evidence="2">
    <location>
        <begin position="404"/>
        <end position="523"/>
    </location>
</feature>
<feature type="region of interest" description="Disordered" evidence="8">
    <location>
        <begin position="422"/>
        <end position="470"/>
    </location>
</feature>
<feature type="region of interest" description="Interaction with the phosphoprotein" evidence="5">
    <location>
        <begin position="477"/>
        <end position="503"/>
    </location>
</feature>
<feature type="region of interest" description="Disordered" evidence="8">
    <location>
        <begin position="501"/>
        <end position="523"/>
    </location>
</feature>
<feature type="compositionally biased region" description="Polar residues" evidence="8">
    <location>
        <begin position="427"/>
        <end position="436"/>
    </location>
</feature>
<feature type="compositionally biased region" description="Basic and acidic residues" evidence="8">
    <location>
        <begin position="447"/>
        <end position="456"/>
    </location>
</feature>
<feature type="compositionally biased region" description="Polar residues" evidence="8">
    <location>
        <begin position="502"/>
        <end position="515"/>
    </location>
</feature>
<feature type="binding site" evidence="5">
    <location>
        <position position="180"/>
    </location>
    <ligand>
        <name>RNA</name>
        <dbReference type="ChEBI" id="CHEBI:33697"/>
    </ligand>
</feature>
<feature type="binding site" evidence="5">
    <location>
        <position position="195"/>
    </location>
    <ligand>
        <name>RNA</name>
        <dbReference type="ChEBI" id="CHEBI:33697"/>
    </ligand>
</feature>
<feature type="binding site" evidence="5">
    <location>
        <position position="202"/>
    </location>
    <ligand>
        <name>RNA</name>
        <dbReference type="ChEBI" id="CHEBI:33697"/>
    </ligand>
</feature>
<feature type="binding site" evidence="5">
    <location>
        <position position="260"/>
    </location>
    <ligand>
        <name>RNA</name>
        <dbReference type="ChEBI" id="CHEBI:33697"/>
    </ligand>
</feature>
<feature type="binding site" evidence="5">
    <location>
        <position position="351"/>
    </location>
    <ligand>
        <name>RNA</name>
        <dbReference type="ChEBI" id="CHEBI:33697"/>
    </ligand>
</feature>
<feature type="sequence variant" description="In strain: Isolate Onderstepoort 3.">
    <original>I</original>
    <variation>S</variation>
    <location>
        <position position="28"/>
    </location>
</feature>
<feature type="sequence variant" description="In strain: Isolate Onderstepoort 3.">
    <original>KI</original>
    <variation>NV</variation>
    <location>
        <begin position="63"/>
        <end position="64"/>
    </location>
</feature>
<feature type="sequence variant" description="In strain: Isolate Onderstepoort 2.">
    <original>A</original>
    <variation>V</variation>
    <location>
        <position position="111"/>
    </location>
</feature>
<feature type="sequence variant" description="In strain: Isolate Onderstepoort 3.">
    <original>LDSE</original>
    <variation>WILR</variation>
    <location>
        <begin position="123"/>
        <end position="126"/>
    </location>
</feature>
<feature type="sequence variant" description="In strain: Isolate Onderstepoort 3.">
    <original>N</original>
    <variation>G</variation>
    <location>
        <position position="351"/>
    </location>
</feature>
<feature type="sequence variant" description="In strain: Isolate Onderstepoort 2.">
    <original>GR</original>
    <variation>ES</variation>
    <location>
        <begin position="353"/>
        <end position="354"/>
    </location>
</feature>
<feature type="sequence variant" description="In strain: Isolate Onderstepoort 3.">
    <original>P</original>
    <variation>L</variation>
    <location>
        <position position="457"/>
    </location>
</feature>
<feature type="sequence variant" description="In strain: Isolate Onderstepoort 3.">
    <original>WSE</original>
    <variation>RSG</variation>
    <location>
        <begin position="468"/>
        <end position="470"/>
    </location>
</feature>
<feature type="sequence variant" description="In strain: Isolate Onderstepoort 3.">
    <original>I</original>
    <variation>V</variation>
    <location>
        <position position="478"/>
    </location>
</feature>
<feature type="sequence variant" description="In strain: Isolate Onderstepoort 2.">
    <original>N</original>
    <variation>S</variation>
    <location>
        <position position="512"/>
    </location>
</feature>
<feature type="sequence variant" description="In strain: Isolate Onderstepoort 1, Isolate Onderstepoort 2 and Isolate Onderstepoort 3.">
    <original>S</original>
    <variation>N</variation>
    <location>
        <position position="517"/>
    </location>
</feature>
<feature type="sequence variant" description="In strain: Isolate Onderstepoort 2.">
    <original>K</original>
    <variation>R</variation>
    <location>
        <position position="519"/>
    </location>
</feature>
<keyword id="KW-0167">Capsid protein</keyword>
<keyword id="KW-1139">Helical capsid protein</keyword>
<keyword id="KW-1035">Host cytoplasm</keyword>
<keyword id="KW-0687">Ribonucleoprotein</keyword>
<keyword id="KW-0694">RNA-binding</keyword>
<keyword id="KW-0543">Viral nucleoprotein</keyword>
<keyword id="KW-0946">Virion</keyword>
<organismHost>
    <name type="scientific">Ailuropoda melanoleuca</name>
    <name type="common">Giant panda</name>
    <dbReference type="NCBI Taxonomy" id="9646"/>
</organismHost>
<organismHost>
    <name type="scientific">Ailurus fulgens</name>
    <name type="common">Himalayan red panda</name>
    <dbReference type="NCBI Taxonomy" id="9649"/>
</organismHost>
<organismHost>
    <name type="scientific">Canis lupus familiaris</name>
    <name type="common">Dog</name>
    <name type="synonym">Canis familiaris</name>
    <dbReference type="NCBI Taxonomy" id="9615"/>
</organismHost>
<organismHost>
    <name type="scientific">Mustela</name>
    <dbReference type="NCBI Taxonomy" id="9665"/>
</organismHost>
<organismHost>
    <name type="scientific">Panthera leo</name>
    <name type="common">Lion</name>
    <dbReference type="NCBI Taxonomy" id="9689"/>
</organismHost>
<organismHost>
    <name type="scientific">Procyon lotor</name>
    <name type="common">Raccoon</name>
    <dbReference type="NCBI Taxonomy" id="9654"/>
</organismHost>
<organismHost>
    <name type="scientific">Zalophus californianus</name>
    <name type="common">California sealion</name>
    <dbReference type="NCBI Taxonomy" id="9704"/>
</organismHost>
<gene>
    <name type="primary">N</name>
</gene>
<name>NCAP_CDVO</name>
<dbReference type="EMBL" id="AF014953">
    <property type="protein sequence ID" value="AAC26990.1"/>
    <property type="molecule type" value="Genomic_RNA"/>
</dbReference>
<dbReference type="EMBL" id="AF305419">
    <property type="protein sequence ID" value="AAG30916.1"/>
    <property type="molecule type" value="Genomic_RNA"/>
</dbReference>
<dbReference type="EMBL" id="AF378705">
    <property type="protein sequence ID" value="AAK54665.1"/>
    <property type="molecule type" value="Genomic_RNA"/>
</dbReference>
<dbReference type="EMBL" id="X02000">
    <property type="protein sequence ID" value="CAA26032.1"/>
    <property type="molecule type" value="mRNA"/>
</dbReference>
<dbReference type="RefSeq" id="NP_047201.1">
    <property type="nucleotide sequence ID" value="NC_001921.1"/>
</dbReference>
<dbReference type="SMR" id="P04865"/>
<dbReference type="ABCD" id="P04865">
    <property type="antibodies" value="1 sequenced antibody"/>
</dbReference>
<dbReference type="KEGG" id="vg:1489798"/>
<dbReference type="Proteomes" id="UP000007634">
    <property type="component" value="Segment"/>
</dbReference>
<dbReference type="Proteomes" id="UP000161417">
    <property type="component" value="Genome"/>
</dbReference>
<dbReference type="Proteomes" id="UP000180889">
    <property type="component" value="Genome"/>
</dbReference>
<dbReference type="GO" id="GO:0019029">
    <property type="term" value="C:helical viral capsid"/>
    <property type="evidence" value="ECO:0007669"/>
    <property type="project" value="UniProtKB-KW"/>
</dbReference>
<dbReference type="GO" id="GO:0030430">
    <property type="term" value="C:host cell cytoplasm"/>
    <property type="evidence" value="ECO:0007669"/>
    <property type="project" value="UniProtKB-SubCell"/>
</dbReference>
<dbReference type="GO" id="GO:1990904">
    <property type="term" value="C:ribonucleoprotein complex"/>
    <property type="evidence" value="ECO:0007669"/>
    <property type="project" value="UniProtKB-KW"/>
</dbReference>
<dbReference type="GO" id="GO:0019013">
    <property type="term" value="C:viral nucleocapsid"/>
    <property type="evidence" value="ECO:0007669"/>
    <property type="project" value="UniProtKB-KW"/>
</dbReference>
<dbReference type="GO" id="GO:0003723">
    <property type="term" value="F:RNA binding"/>
    <property type="evidence" value="ECO:0007669"/>
    <property type="project" value="UniProtKB-KW"/>
</dbReference>
<dbReference type="GO" id="GO:0005198">
    <property type="term" value="F:structural molecule activity"/>
    <property type="evidence" value="ECO:0007669"/>
    <property type="project" value="InterPro"/>
</dbReference>
<dbReference type="InterPro" id="IPR002021">
    <property type="entry name" value="Paramyx_ncap"/>
</dbReference>
<dbReference type="Pfam" id="PF00973">
    <property type="entry name" value="Paramyxo_ncap"/>
    <property type="match status" value="1"/>
</dbReference>
<sequence>MASLLKSLTLFKRTRDQPPLASGSGGAIRGIKHVIIVLIPGDSSIVTRSRLLDRLVRLVGDPKINGPKLTGILISILSLFVESPGQLIQRIIDDPDVSIKLVEVIPSINSACGLTFASRGASLDSEADEFFKIVDEGSKAQGQLGWLENKDIVDIEVDNAEQFNILLASILAQIWILLAKAVTAPDTAADSEMRRWIKYTQQRRVVGEFRMNKIWLDIVRNRIAEDLSLRRFMVALILDIKRSPGNKPRIAEMICDIDNYIVEAGLASFILTIKFGIETMYPALGLHEFSGELTTIESLMMLYQQMGETAPYMVILENSVQNKFSAGSYPLLWSYAMGVGVELENSMGGLNFGRSYFDPAYFRLGQEMVRRSAGKVSSALAAELGITKEEAQLVSEIASKTTEDRTIRATGPKQSQITFLHSERSEVANQQPPTINKRSENQGGDKYPIHFSDERLPGYTPDVNSSEWSESRYDTQIIQDDGNDDDRKSMEAIAKMRMLTKMLSQPGTSEDNSPVYSDKELLN</sequence>
<protein>
    <recommendedName>
        <fullName>Nucleoprotein</fullName>
        <shortName>Protein N</shortName>
    </recommendedName>
    <alternativeName>
        <fullName>Nucleocapsid protein</fullName>
    </alternativeName>
</protein>
<comment type="function">
    <text evidence="2 5">Forms the helical nucleocapsid (NC) in a ratio of 1 N per 6 ribonucleotides, protecting the genome from nucleases. The nucleocapsid (NC) has a helical structure with either 12.35 or 11.64 N per turn, approximately 20 nm in diameter, with a hollow central cavity approximately 5 nm in diameter (By similarity). The encapsidated genomic RNA serves as template for transcription and replication; encapsidation by N is coupled to RNA synthesis. Forms the encapsidation complex with the phosphoprotein protein P. Before encapsidation, the newly synthesized free N protein, so-called N0, is chaperoned by P (By similarity). Participates, together with P, in the formation of viral factories (viroplasms), which are large inclusions in the host cytoplasm where replication takes place (By similarity).</text>
</comment>
<comment type="subunit">
    <text evidence="1 2 4 5">Homomultimer; forms the nucleocapsid (By similarity). Binds to viral genomic RNA (By similarity). N0 interacts (via Ncore) with the phosphoprotein (via N-terminus); this interaction allows P to chaperon N0 to avoid N polymerization before encapsidation (By similarity). Interacts as N-RNA template with the phosphoprotein (via C-terminus); this interaction positions the polymerase on the template (By similarity). Interacts with the phosphoprotein; this interaction leads to the formation of membraneless organelles that function as viral replication factories (By similarity).</text>
</comment>
<comment type="subcellular location">
    <subcellularLocation>
        <location evidence="7">Virion</location>
    </subcellularLocation>
    <subcellularLocation>
        <location evidence="7">Host cytoplasm</location>
    </subcellularLocation>
</comment>
<comment type="domain">
    <text evidence="6">Ncore is globular and carries regions required for N self-assembly and RNA-binding. Ntail is an intrinsically disordered monomeric domain in the C-terminus.</text>
</comment>
<comment type="similarity">
    <text evidence="9">Belongs to the paramyxoviruses nucleocapsid family.</text>
</comment>
<organism>
    <name type="scientific">Canine distemper virus (strain Onderstepoort)</name>
    <name type="common">CDV</name>
    <dbReference type="NCBI Taxonomy" id="11233"/>
    <lineage>
        <taxon>Viruses</taxon>
        <taxon>Riboviria</taxon>
        <taxon>Orthornavirae</taxon>
        <taxon>Negarnaviricota</taxon>
        <taxon>Haploviricotina</taxon>
        <taxon>Monjiviricetes</taxon>
        <taxon>Mononegavirales</taxon>
        <taxon>Paramyxoviridae</taxon>
        <taxon>Orthoparamyxovirinae</taxon>
        <taxon>Morbillivirus</taxon>
        <taxon>Morbillivirus canis</taxon>
    </lineage>
</organism>
<proteinExistence type="evidence at transcript level"/>
<reference key="1">
    <citation type="journal article" date="1993" name="Virology">
        <title>Canine distemper terminal and intergenic non-protein coding nucleotide sequences: completion of the entire CDV genome sequence.</title>
        <authorList>
            <person name="Sidhu M.S."/>
            <person name="Husar W."/>
            <person name="Cook S.D."/>
            <person name="Dowling P.C."/>
            <person name="Udem S.A."/>
        </authorList>
    </citation>
    <scope>NUCLEOTIDE SEQUENCE [GENOMIC RNA]</scope>
</reference>
<reference key="2">
    <citation type="submission" date="1997-07" db="EMBL/GenBank/DDBJ databases">
        <authorList>
            <person name="Sidhu M.S."/>
        </authorList>
    </citation>
    <scope>SEQUENCE REVISION TO 28; 63-64; 123-126; 351; 457; 468-470; 478 AND 517</scope>
</reference>
<reference key="3">
    <citation type="journal article" date="2000" name="J. Virol.">
        <title>Establishment of a rescue system for canine distemper virus.</title>
        <authorList>
            <person name="Gassen U."/>
            <person name="Collins F.M."/>
            <person name="Duprex W.P."/>
            <person name="Rima B.K."/>
        </authorList>
    </citation>
    <scope>NUCLEOTIDE SEQUENCE [GENOMIC RNA]</scope>
    <source>
        <strain>Isolate Onderstepoort 1</strain>
    </source>
</reference>
<reference key="4">
    <citation type="journal article" date="2001" name="J. Virol.">
        <title>The hemagglutinin of canine distemper virus determines tropism and cytopathogenicity.</title>
        <authorList>
            <person name="von Messling V."/>
            <person name="Zimmer G."/>
            <person name="Herrler G."/>
            <person name="Haas L."/>
            <person name="Cattaneo R."/>
        </authorList>
    </citation>
    <scope>NUCLEOTIDE SEQUENCE [GENOMIC RNA]</scope>
    <source>
        <strain>Isolate Onderstepoort 2</strain>
    </source>
</reference>
<reference key="5">
    <citation type="journal article" date="1985" name="J. Virol.">
        <title>Sequence homology within the morbilliviruses.</title>
        <authorList>
            <person name="Rozenblatt S."/>
            <person name="Eizenberg O."/>
            <person name="Ben-Levy R."/>
            <person name="Lavie V."/>
            <person name="Bellini W.J."/>
        </authorList>
    </citation>
    <scope>NUCLEOTIDE SEQUENCE [MRNA] OF 10-523</scope>
    <source>
        <strain>Isolate Onderstepoort 3</strain>
    </source>
</reference>
<accession>P04865</accession>
<accession>Q91KN6</accession>
<accession>Q9DXZ4</accession>
<evidence type="ECO:0000250" key="1">
    <source>
        <dbReference type="UniProtKB" id="O57286"/>
    </source>
</evidence>
<evidence type="ECO:0000250" key="2">
    <source>
        <dbReference type="UniProtKB" id="P06159"/>
    </source>
</evidence>
<evidence type="ECO:0000250" key="3">
    <source>
        <dbReference type="UniProtKB" id="P10050"/>
    </source>
</evidence>
<evidence type="ECO:0000250" key="4">
    <source>
        <dbReference type="UniProtKB" id="Q07097"/>
    </source>
</evidence>
<evidence type="ECO:0000250" key="5">
    <source>
        <dbReference type="UniProtKB" id="Q77M43"/>
    </source>
</evidence>
<evidence type="ECO:0000250" key="6">
    <source>
        <dbReference type="UniProtKB" id="Q89933"/>
    </source>
</evidence>
<evidence type="ECO:0000250" key="7">
    <source>
        <dbReference type="UniProtKB" id="Q9WMB5"/>
    </source>
</evidence>
<evidence type="ECO:0000256" key="8">
    <source>
        <dbReference type="SAM" id="MobiDB-lite"/>
    </source>
</evidence>
<evidence type="ECO:0000305" key="9"/>